<feature type="chain" id="PRO_1000139479" description="CTP synthase">
    <location>
        <begin position="1"/>
        <end position="539"/>
    </location>
</feature>
<feature type="domain" description="Glutamine amidotransferase type-1" evidence="1">
    <location>
        <begin position="294"/>
        <end position="537"/>
    </location>
</feature>
<feature type="region of interest" description="Amidoligase domain" evidence="1">
    <location>
        <begin position="1"/>
        <end position="267"/>
    </location>
</feature>
<feature type="active site" description="Nucleophile; for glutamine hydrolysis" evidence="1">
    <location>
        <position position="383"/>
    </location>
</feature>
<feature type="active site" evidence="1">
    <location>
        <position position="510"/>
    </location>
</feature>
<feature type="active site" evidence="1">
    <location>
        <position position="512"/>
    </location>
</feature>
<feature type="binding site" evidence="1">
    <location>
        <position position="13"/>
    </location>
    <ligand>
        <name>CTP</name>
        <dbReference type="ChEBI" id="CHEBI:37563"/>
        <note>allosteric inhibitor</note>
    </ligand>
</feature>
<feature type="binding site" evidence="1">
    <location>
        <position position="13"/>
    </location>
    <ligand>
        <name>UTP</name>
        <dbReference type="ChEBI" id="CHEBI:46398"/>
    </ligand>
</feature>
<feature type="binding site" evidence="1">
    <location>
        <begin position="14"/>
        <end position="19"/>
    </location>
    <ligand>
        <name>ATP</name>
        <dbReference type="ChEBI" id="CHEBI:30616"/>
    </ligand>
</feature>
<feature type="binding site" evidence="1">
    <location>
        <position position="54"/>
    </location>
    <ligand>
        <name>L-glutamine</name>
        <dbReference type="ChEBI" id="CHEBI:58359"/>
    </ligand>
</feature>
<feature type="binding site" evidence="1">
    <location>
        <position position="71"/>
    </location>
    <ligand>
        <name>ATP</name>
        <dbReference type="ChEBI" id="CHEBI:30616"/>
    </ligand>
</feature>
<feature type="binding site" evidence="1">
    <location>
        <position position="71"/>
    </location>
    <ligand>
        <name>Mg(2+)</name>
        <dbReference type="ChEBI" id="CHEBI:18420"/>
    </ligand>
</feature>
<feature type="binding site" evidence="1">
    <location>
        <position position="141"/>
    </location>
    <ligand>
        <name>Mg(2+)</name>
        <dbReference type="ChEBI" id="CHEBI:18420"/>
    </ligand>
</feature>
<feature type="binding site" evidence="1">
    <location>
        <begin position="148"/>
        <end position="150"/>
    </location>
    <ligand>
        <name>CTP</name>
        <dbReference type="ChEBI" id="CHEBI:37563"/>
        <note>allosteric inhibitor</note>
    </ligand>
</feature>
<feature type="binding site" evidence="1">
    <location>
        <begin position="188"/>
        <end position="193"/>
    </location>
    <ligand>
        <name>CTP</name>
        <dbReference type="ChEBI" id="CHEBI:37563"/>
        <note>allosteric inhibitor</note>
    </ligand>
</feature>
<feature type="binding site" evidence="1">
    <location>
        <begin position="188"/>
        <end position="193"/>
    </location>
    <ligand>
        <name>UTP</name>
        <dbReference type="ChEBI" id="CHEBI:46398"/>
    </ligand>
</feature>
<feature type="binding site" evidence="1">
    <location>
        <position position="224"/>
    </location>
    <ligand>
        <name>CTP</name>
        <dbReference type="ChEBI" id="CHEBI:37563"/>
        <note>allosteric inhibitor</note>
    </ligand>
</feature>
<feature type="binding site" evidence="1">
    <location>
        <position position="224"/>
    </location>
    <ligand>
        <name>UTP</name>
        <dbReference type="ChEBI" id="CHEBI:46398"/>
    </ligand>
</feature>
<feature type="binding site" evidence="1">
    <location>
        <position position="356"/>
    </location>
    <ligand>
        <name>L-glutamine</name>
        <dbReference type="ChEBI" id="CHEBI:58359"/>
    </ligand>
</feature>
<feature type="binding site" evidence="1">
    <location>
        <begin position="384"/>
        <end position="387"/>
    </location>
    <ligand>
        <name>L-glutamine</name>
        <dbReference type="ChEBI" id="CHEBI:58359"/>
    </ligand>
</feature>
<feature type="binding site" evidence="1">
    <location>
        <position position="407"/>
    </location>
    <ligand>
        <name>L-glutamine</name>
        <dbReference type="ChEBI" id="CHEBI:58359"/>
    </ligand>
</feature>
<feature type="binding site" evidence="1">
    <location>
        <position position="465"/>
    </location>
    <ligand>
        <name>L-glutamine</name>
        <dbReference type="ChEBI" id="CHEBI:58359"/>
    </ligand>
</feature>
<sequence>MTKYIFVTGGVVSSLGKGITASSLGRLLKNRGLKVTMQKFDPYINIDPGTMSPYQHGEVYVTEDGTEADLDLGHYERIVDVRTSKYSNVTTGKIYQEVLEKERRGDYNGATVQVIPHITDMIKKKIMRAALTTDSDVIISEIGGTVGDMESTPFMEAIRQMRREVGEENVMYIHCTLVPLLHAAHEMKTKPTQHSVAELRSIGIQPNMLVLRAEQPIDQEHKNKISTFTDVPVDRIIESIDAPSLFDVPLAFQKQGMDQKVCDFLHIDSPKPEADMEAWKKLDDRAKNLKHHTKITLVGKYVELEDAYISVTDALQHAGYLYNTKIDVDKVQAEDITEDNIAKIMEGSDGLIVPGGFGTRGLEGMITAIKYARENDIPFLGICLGMQMASVEFARDILNLEDANTTEAEPHCKNNIIDIMADKRDEENIGGTLRLGLYPAALKKGTKTREAYGDQDVIQERHRHRFEFNNKYREAFEKAGMVFSGVSPDNHLVEIIELPKKKFFIAAQYHPEFLSRPQRPEGLFKSFIGAASGLPEQEF</sequence>
<dbReference type="EC" id="6.3.4.2" evidence="1"/>
<dbReference type="EMBL" id="CP000517">
    <property type="protein sequence ID" value="ABX26489.1"/>
    <property type="molecule type" value="Genomic_DNA"/>
</dbReference>
<dbReference type="RefSeq" id="WP_003625589.1">
    <property type="nucleotide sequence ID" value="NC_010080.1"/>
</dbReference>
<dbReference type="SMR" id="A8YXF8"/>
<dbReference type="KEGG" id="lhe:lhv_0247"/>
<dbReference type="eggNOG" id="COG0504">
    <property type="taxonomic scope" value="Bacteria"/>
</dbReference>
<dbReference type="HOGENOM" id="CLU_011675_5_0_9"/>
<dbReference type="UniPathway" id="UPA00159">
    <property type="reaction ID" value="UER00277"/>
</dbReference>
<dbReference type="Proteomes" id="UP000000790">
    <property type="component" value="Chromosome"/>
</dbReference>
<dbReference type="GO" id="GO:0005829">
    <property type="term" value="C:cytosol"/>
    <property type="evidence" value="ECO:0007669"/>
    <property type="project" value="TreeGrafter"/>
</dbReference>
<dbReference type="GO" id="GO:0005524">
    <property type="term" value="F:ATP binding"/>
    <property type="evidence" value="ECO:0007669"/>
    <property type="project" value="UniProtKB-KW"/>
</dbReference>
<dbReference type="GO" id="GO:0003883">
    <property type="term" value="F:CTP synthase activity"/>
    <property type="evidence" value="ECO:0007669"/>
    <property type="project" value="UniProtKB-UniRule"/>
</dbReference>
<dbReference type="GO" id="GO:0004359">
    <property type="term" value="F:glutaminase activity"/>
    <property type="evidence" value="ECO:0007669"/>
    <property type="project" value="RHEA"/>
</dbReference>
<dbReference type="GO" id="GO:0042802">
    <property type="term" value="F:identical protein binding"/>
    <property type="evidence" value="ECO:0007669"/>
    <property type="project" value="TreeGrafter"/>
</dbReference>
<dbReference type="GO" id="GO:0046872">
    <property type="term" value="F:metal ion binding"/>
    <property type="evidence" value="ECO:0007669"/>
    <property type="project" value="UniProtKB-KW"/>
</dbReference>
<dbReference type="GO" id="GO:0044210">
    <property type="term" value="P:'de novo' CTP biosynthetic process"/>
    <property type="evidence" value="ECO:0007669"/>
    <property type="project" value="UniProtKB-UniRule"/>
</dbReference>
<dbReference type="GO" id="GO:0019856">
    <property type="term" value="P:pyrimidine nucleobase biosynthetic process"/>
    <property type="evidence" value="ECO:0007669"/>
    <property type="project" value="TreeGrafter"/>
</dbReference>
<dbReference type="CDD" id="cd03113">
    <property type="entry name" value="CTPS_N"/>
    <property type="match status" value="1"/>
</dbReference>
<dbReference type="CDD" id="cd01746">
    <property type="entry name" value="GATase1_CTP_Synthase"/>
    <property type="match status" value="1"/>
</dbReference>
<dbReference type="FunFam" id="3.40.50.300:FF:000009">
    <property type="entry name" value="CTP synthase"/>
    <property type="match status" value="1"/>
</dbReference>
<dbReference type="FunFam" id="3.40.50.880:FF:000002">
    <property type="entry name" value="CTP synthase"/>
    <property type="match status" value="1"/>
</dbReference>
<dbReference type="Gene3D" id="3.40.50.880">
    <property type="match status" value="1"/>
</dbReference>
<dbReference type="Gene3D" id="3.40.50.300">
    <property type="entry name" value="P-loop containing nucleotide triphosphate hydrolases"/>
    <property type="match status" value="1"/>
</dbReference>
<dbReference type="HAMAP" id="MF_01227">
    <property type="entry name" value="PyrG"/>
    <property type="match status" value="1"/>
</dbReference>
<dbReference type="InterPro" id="IPR029062">
    <property type="entry name" value="Class_I_gatase-like"/>
</dbReference>
<dbReference type="InterPro" id="IPR004468">
    <property type="entry name" value="CTP_synthase"/>
</dbReference>
<dbReference type="InterPro" id="IPR017456">
    <property type="entry name" value="CTP_synthase_N"/>
</dbReference>
<dbReference type="InterPro" id="IPR017926">
    <property type="entry name" value="GATASE"/>
</dbReference>
<dbReference type="InterPro" id="IPR033828">
    <property type="entry name" value="GATase1_CTP_Synthase"/>
</dbReference>
<dbReference type="InterPro" id="IPR027417">
    <property type="entry name" value="P-loop_NTPase"/>
</dbReference>
<dbReference type="NCBIfam" id="NF003792">
    <property type="entry name" value="PRK05380.1"/>
    <property type="match status" value="1"/>
</dbReference>
<dbReference type="NCBIfam" id="TIGR00337">
    <property type="entry name" value="PyrG"/>
    <property type="match status" value="1"/>
</dbReference>
<dbReference type="PANTHER" id="PTHR11550">
    <property type="entry name" value="CTP SYNTHASE"/>
    <property type="match status" value="1"/>
</dbReference>
<dbReference type="PANTHER" id="PTHR11550:SF0">
    <property type="entry name" value="CTP SYNTHASE-RELATED"/>
    <property type="match status" value="1"/>
</dbReference>
<dbReference type="Pfam" id="PF06418">
    <property type="entry name" value="CTP_synth_N"/>
    <property type="match status" value="1"/>
</dbReference>
<dbReference type="Pfam" id="PF00117">
    <property type="entry name" value="GATase"/>
    <property type="match status" value="1"/>
</dbReference>
<dbReference type="SUPFAM" id="SSF52317">
    <property type="entry name" value="Class I glutamine amidotransferase-like"/>
    <property type="match status" value="1"/>
</dbReference>
<dbReference type="SUPFAM" id="SSF52540">
    <property type="entry name" value="P-loop containing nucleoside triphosphate hydrolases"/>
    <property type="match status" value="1"/>
</dbReference>
<dbReference type="PROSITE" id="PS51273">
    <property type="entry name" value="GATASE_TYPE_1"/>
    <property type="match status" value="1"/>
</dbReference>
<reference key="1">
    <citation type="journal article" date="2008" name="J. Bacteriol.">
        <title>Genome sequence of Lactobacillus helveticus: an organism distinguished by selective gene loss and IS element expansion.</title>
        <authorList>
            <person name="Callanan M."/>
            <person name="Kaleta P."/>
            <person name="O'Callaghan J."/>
            <person name="O'Sullivan O."/>
            <person name="Jordan K."/>
            <person name="McAuliffe O."/>
            <person name="Sangrador-Vegas A."/>
            <person name="Slattery L."/>
            <person name="Fitzgerald G.F."/>
            <person name="Beresford T."/>
            <person name="Ross R.P."/>
        </authorList>
    </citation>
    <scope>NUCLEOTIDE SEQUENCE [LARGE SCALE GENOMIC DNA]</scope>
    <source>
        <strain>DPC 4571</strain>
    </source>
</reference>
<evidence type="ECO:0000255" key="1">
    <source>
        <dbReference type="HAMAP-Rule" id="MF_01227"/>
    </source>
</evidence>
<protein>
    <recommendedName>
        <fullName evidence="1">CTP synthase</fullName>
        <ecNumber evidence="1">6.3.4.2</ecNumber>
    </recommendedName>
    <alternativeName>
        <fullName evidence="1">Cytidine 5'-triphosphate synthase</fullName>
    </alternativeName>
    <alternativeName>
        <fullName evidence="1">Cytidine triphosphate synthetase</fullName>
        <shortName evidence="1">CTP synthetase</shortName>
        <shortName evidence="1">CTPS</shortName>
    </alternativeName>
    <alternativeName>
        <fullName evidence="1">UTP--ammonia ligase</fullName>
    </alternativeName>
</protein>
<accession>A8YXF8</accession>
<keyword id="KW-0067">ATP-binding</keyword>
<keyword id="KW-0315">Glutamine amidotransferase</keyword>
<keyword id="KW-0436">Ligase</keyword>
<keyword id="KW-0460">Magnesium</keyword>
<keyword id="KW-0479">Metal-binding</keyword>
<keyword id="KW-0547">Nucleotide-binding</keyword>
<keyword id="KW-0665">Pyrimidine biosynthesis</keyword>
<name>PYRG_LACH4</name>
<gene>
    <name evidence="1" type="primary">pyrG</name>
    <name type="ordered locus">lhv_0247</name>
</gene>
<organism>
    <name type="scientific">Lactobacillus helveticus (strain DPC 4571)</name>
    <dbReference type="NCBI Taxonomy" id="405566"/>
    <lineage>
        <taxon>Bacteria</taxon>
        <taxon>Bacillati</taxon>
        <taxon>Bacillota</taxon>
        <taxon>Bacilli</taxon>
        <taxon>Lactobacillales</taxon>
        <taxon>Lactobacillaceae</taxon>
        <taxon>Lactobacillus</taxon>
    </lineage>
</organism>
<comment type="function">
    <text evidence="1">Catalyzes the ATP-dependent amination of UTP to CTP with either L-glutamine or ammonia as the source of nitrogen. Regulates intracellular CTP levels through interactions with the four ribonucleotide triphosphates.</text>
</comment>
<comment type="catalytic activity">
    <reaction evidence="1">
        <text>UTP + L-glutamine + ATP + H2O = CTP + L-glutamate + ADP + phosphate + 2 H(+)</text>
        <dbReference type="Rhea" id="RHEA:26426"/>
        <dbReference type="ChEBI" id="CHEBI:15377"/>
        <dbReference type="ChEBI" id="CHEBI:15378"/>
        <dbReference type="ChEBI" id="CHEBI:29985"/>
        <dbReference type="ChEBI" id="CHEBI:30616"/>
        <dbReference type="ChEBI" id="CHEBI:37563"/>
        <dbReference type="ChEBI" id="CHEBI:43474"/>
        <dbReference type="ChEBI" id="CHEBI:46398"/>
        <dbReference type="ChEBI" id="CHEBI:58359"/>
        <dbReference type="ChEBI" id="CHEBI:456216"/>
        <dbReference type="EC" id="6.3.4.2"/>
    </reaction>
</comment>
<comment type="catalytic activity">
    <reaction evidence="1">
        <text>L-glutamine + H2O = L-glutamate + NH4(+)</text>
        <dbReference type="Rhea" id="RHEA:15889"/>
        <dbReference type="ChEBI" id="CHEBI:15377"/>
        <dbReference type="ChEBI" id="CHEBI:28938"/>
        <dbReference type="ChEBI" id="CHEBI:29985"/>
        <dbReference type="ChEBI" id="CHEBI:58359"/>
    </reaction>
</comment>
<comment type="catalytic activity">
    <reaction evidence="1">
        <text>UTP + NH4(+) + ATP = CTP + ADP + phosphate + 2 H(+)</text>
        <dbReference type="Rhea" id="RHEA:16597"/>
        <dbReference type="ChEBI" id="CHEBI:15378"/>
        <dbReference type="ChEBI" id="CHEBI:28938"/>
        <dbReference type="ChEBI" id="CHEBI:30616"/>
        <dbReference type="ChEBI" id="CHEBI:37563"/>
        <dbReference type="ChEBI" id="CHEBI:43474"/>
        <dbReference type="ChEBI" id="CHEBI:46398"/>
        <dbReference type="ChEBI" id="CHEBI:456216"/>
    </reaction>
</comment>
<comment type="activity regulation">
    <text evidence="1">Allosterically activated by GTP, when glutamine is the substrate; GTP has no effect on the reaction when ammonia is the substrate. The allosteric effector GTP functions by stabilizing the protein conformation that binds the tetrahedral intermediate(s) formed during glutamine hydrolysis. Inhibited by the product CTP, via allosteric rather than competitive inhibition.</text>
</comment>
<comment type="pathway">
    <text evidence="1">Pyrimidine metabolism; CTP biosynthesis via de novo pathway; CTP from UDP: step 2/2.</text>
</comment>
<comment type="subunit">
    <text evidence="1">Homotetramer.</text>
</comment>
<comment type="miscellaneous">
    <text evidence="1">CTPSs have evolved a hybrid strategy for distinguishing between UTP and CTP. The overlapping regions of the product feedback inhibitory and substrate sites recognize a common feature in both compounds, the triphosphate moiety. To differentiate isosteric substrate and product pyrimidine rings, an additional pocket far from the expected kinase/ligase catalytic site, specifically recognizes the cytosine and ribose portions of the product inhibitor.</text>
</comment>
<comment type="similarity">
    <text evidence="1">Belongs to the CTP synthase family.</text>
</comment>
<proteinExistence type="inferred from homology"/>